<dbReference type="EC" id="1.3.1.98" evidence="1"/>
<dbReference type="EMBL" id="BX571856">
    <property type="protein sequence ID" value="CAG39802.1"/>
    <property type="molecule type" value="Genomic_DNA"/>
</dbReference>
<dbReference type="RefSeq" id="WP_000608444.1">
    <property type="nucleotide sequence ID" value="NC_002952.2"/>
</dbReference>
<dbReference type="SMR" id="Q6GIQ3"/>
<dbReference type="KEGG" id="sar:SAR0792"/>
<dbReference type="HOGENOM" id="CLU_035304_1_1_9"/>
<dbReference type="UniPathway" id="UPA00219"/>
<dbReference type="Proteomes" id="UP000000596">
    <property type="component" value="Chromosome"/>
</dbReference>
<dbReference type="GO" id="GO:0005829">
    <property type="term" value="C:cytosol"/>
    <property type="evidence" value="ECO:0007669"/>
    <property type="project" value="TreeGrafter"/>
</dbReference>
<dbReference type="GO" id="GO:0071949">
    <property type="term" value="F:FAD binding"/>
    <property type="evidence" value="ECO:0007669"/>
    <property type="project" value="InterPro"/>
</dbReference>
<dbReference type="GO" id="GO:0008762">
    <property type="term" value="F:UDP-N-acetylmuramate dehydrogenase activity"/>
    <property type="evidence" value="ECO:0007669"/>
    <property type="project" value="UniProtKB-UniRule"/>
</dbReference>
<dbReference type="GO" id="GO:0051301">
    <property type="term" value="P:cell division"/>
    <property type="evidence" value="ECO:0007669"/>
    <property type="project" value="UniProtKB-KW"/>
</dbReference>
<dbReference type="GO" id="GO:0071555">
    <property type="term" value="P:cell wall organization"/>
    <property type="evidence" value="ECO:0007669"/>
    <property type="project" value="UniProtKB-KW"/>
</dbReference>
<dbReference type="GO" id="GO:0009252">
    <property type="term" value="P:peptidoglycan biosynthetic process"/>
    <property type="evidence" value="ECO:0007669"/>
    <property type="project" value="UniProtKB-UniRule"/>
</dbReference>
<dbReference type="GO" id="GO:0008360">
    <property type="term" value="P:regulation of cell shape"/>
    <property type="evidence" value="ECO:0007669"/>
    <property type="project" value="UniProtKB-KW"/>
</dbReference>
<dbReference type="FunFam" id="3.90.78.10:FF:000001">
    <property type="entry name" value="UDP-N-acetylenolpyruvoylglucosamine reductase"/>
    <property type="match status" value="1"/>
</dbReference>
<dbReference type="Gene3D" id="3.30.465.10">
    <property type="match status" value="1"/>
</dbReference>
<dbReference type="Gene3D" id="3.90.78.10">
    <property type="entry name" value="UDP-N-acetylenolpyruvoylglucosamine reductase, C-terminal domain"/>
    <property type="match status" value="1"/>
</dbReference>
<dbReference type="Gene3D" id="3.30.43.10">
    <property type="entry name" value="Uridine Diphospho-n-acetylenolpyruvylglucosamine Reductase, domain 2"/>
    <property type="match status" value="1"/>
</dbReference>
<dbReference type="HAMAP" id="MF_00037">
    <property type="entry name" value="MurB"/>
    <property type="match status" value="1"/>
</dbReference>
<dbReference type="InterPro" id="IPR016166">
    <property type="entry name" value="FAD-bd_PCMH"/>
</dbReference>
<dbReference type="InterPro" id="IPR036318">
    <property type="entry name" value="FAD-bd_PCMH-like_sf"/>
</dbReference>
<dbReference type="InterPro" id="IPR016167">
    <property type="entry name" value="FAD-bd_PCMH_sub1"/>
</dbReference>
<dbReference type="InterPro" id="IPR016169">
    <property type="entry name" value="FAD-bd_PCMH_sub2"/>
</dbReference>
<dbReference type="InterPro" id="IPR003170">
    <property type="entry name" value="MurB"/>
</dbReference>
<dbReference type="InterPro" id="IPR011601">
    <property type="entry name" value="MurB_C"/>
</dbReference>
<dbReference type="InterPro" id="IPR036635">
    <property type="entry name" value="MurB_C_sf"/>
</dbReference>
<dbReference type="InterPro" id="IPR006094">
    <property type="entry name" value="Oxid_FAD_bind_N"/>
</dbReference>
<dbReference type="NCBIfam" id="TIGR00179">
    <property type="entry name" value="murB"/>
    <property type="match status" value="1"/>
</dbReference>
<dbReference type="NCBIfam" id="NF010480">
    <property type="entry name" value="PRK13905.1"/>
    <property type="match status" value="1"/>
</dbReference>
<dbReference type="PANTHER" id="PTHR21071">
    <property type="entry name" value="UDP-N-ACETYLENOLPYRUVOYLGLUCOSAMINE REDUCTASE"/>
    <property type="match status" value="1"/>
</dbReference>
<dbReference type="PANTHER" id="PTHR21071:SF4">
    <property type="entry name" value="UDP-N-ACETYLENOLPYRUVOYLGLUCOSAMINE REDUCTASE"/>
    <property type="match status" value="1"/>
</dbReference>
<dbReference type="Pfam" id="PF01565">
    <property type="entry name" value="FAD_binding_4"/>
    <property type="match status" value="1"/>
</dbReference>
<dbReference type="Pfam" id="PF02873">
    <property type="entry name" value="MurB_C"/>
    <property type="match status" value="1"/>
</dbReference>
<dbReference type="SUPFAM" id="SSF56176">
    <property type="entry name" value="FAD-binding/transporter-associated domain-like"/>
    <property type="match status" value="1"/>
</dbReference>
<dbReference type="SUPFAM" id="SSF56194">
    <property type="entry name" value="Uridine diphospho-N-Acetylenolpyruvylglucosamine reductase, MurB, C-terminal domain"/>
    <property type="match status" value="1"/>
</dbReference>
<dbReference type="PROSITE" id="PS51387">
    <property type="entry name" value="FAD_PCMH"/>
    <property type="match status" value="1"/>
</dbReference>
<sequence length="307" mass="33753">MINKDIYQALQQLIPNEKIKVDEPLKRYTYTKTGGNADFYITPTKNVEVQAVVKYAYQNEIPVTYLGNGSNIIIREGGIRGIVISLLSLDHIEVSDDAIIAGSGAAIIDVSRVARDYALTGLEFACGIPGSIGGAVYMNAGAYGGEVKDCIDYALCVNEQGSLVKLTTKELELDYRNSIIQKEHLVVLEAAFTLAPGKMTEIQAKMDDLTERRESKQPLEYPSCGSVFQRPPGHFAGKLIQDSNLQGHRIGGVEVSTKHAGFMVNVDNGTATDYENLIHYVQKTVKEKFGIELNREVRIIGEHPKES</sequence>
<proteinExistence type="inferred from homology"/>
<feature type="chain" id="PRO_0000179259" description="UDP-N-acetylenolpyruvoylglucosamine reductase">
    <location>
        <begin position="1"/>
        <end position="307"/>
    </location>
</feature>
<feature type="domain" description="FAD-binding PCMH-type" evidence="1">
    <location>
        <begin position="33"/>
        <end position="197"/>
    </location>
</feature>
<feature type="active site" evidence="1">
    <location>
        <position position="176"/>
    </location>
</feature>
<feature type="active site" description="Proton donor" evidence="1">
    <location>
        <position position="226"/>
    </location>
</feature>
<feature type="active site" evidence="1">
    <location>
        <position position="296"/>
    </location>
</feature>
<keyword id="KW-0131">Cell cycle</keyword>
<keyword id="KW-0132">Cell division</keyword>
<keyword id="KW-0133">Cell shape</keyword>
<keyword id="KW-0961">Cell wall biogenesis/degradation</keyword>
<keyword id="KW-0963">Cytoplasm</keyword>
<keyword id="KW-0274">FAD</keyword>
<keyword id="KW-0285">Flavoprotein</keyword>
<keyword id="KW-0521">NADP</keyword>
<keyword id="KW-0560">Oxidoreductase</keyword>
<keyword id="KW-0573">Peptidoglycan synthesis</keyword>
<accession>Q6GIQ3</accession>
<gene>
    <name evidence="1" type="primary">murB</name>
    <name type="ordered locus">SAR0792</name>
</gene>
<evidence type="ECO:0000255" key="1">
    <source>
        <dbReference type="HAMAP-Rule" id="MF_00037"/>
    </source>
</evidence>
<comment type="function">
    <text evidence="1">Cell wall formation.</text>
</comment>
<comment type="catalytic activity">
    <reaction evidence="1">
        <text>UDP-N-acetyl-alpha-D-muramate + NADP(+) = UDP-N-acetyl-3-O-(1-carboxyvinyl)-alpha-D-glucosamine + NADPH + H(+)</text>
        <dbReference type="Rhea" id="RHEA:12248"/>
        <dbReference type="ChEBI" id="CHEBI:15378"/>
        <dbReference type="ChEBI" id="CHEBI:57783"/>
        <dbReference type="ChEBI" id="CHEBI:58349"/>
        <dbReference type="ChEBI" id="CHEBI:68483"/>
        <dbReference type="ChEBI" id="CHEBI:70757"/>
        <dbReference type="EC" id="1.3.1.98"/>
    </reaction>
</comment>
<comment type="cofactor">
    <cofactor evidence="1">
        <name>FAD</name>
        <dbReference type="ChEBI" id="CHEBI:57692"/>
    </cofactor>
</comment>
<comment type="pathway">
    <text evidence="1">Cell wall biogenesis; peptidoglycan biosynthesis.</text>
</comment>
<comment type="subcellular location">
    <subcellularLocation>
        <location evidence="1">Cytoplasm</location>
    </subcellularLocation>
</comment>
<comment type="similarity">
    <text evidence="1">Belongs to the MurB family.</text>
</comment>
<protein>
    <recommendedName>
        <fullName evidence="1">UDP-N-acetylenolpyruvoylglucosamine reductase</fullName>
        <ecNumber evidence="1">1.3.1.98</ecNumber>
    </recommendedName>
    <alternativeName>
        <fullName evidence="1">UDP-N-acetylmuramate dehydrogenase</fullName>
    </alternativeName>
</protein>
<reference key="1">
    <citation type="journal article" date="2004" name="Proc. Natl. Acad. Sci. U.S.A.">
        <title>Complete genomes of two clinical Staphylococcus aureus strains: evidence for the rapid evolution of virulence and drug resistance.</title>
        <authorList>
            <person name="Holden M.T.G."/>
            <person name="Feil E.J."/>
            <person name="Lindsay J.A."/>
            <person name="Peacock S.J."/>
            <person name="Day N.P.J."/>
            <person name="Enright M.C."/>
            <person name="Foster T.J."/>
            <person name="Moore C.E."/>
            <person name="Hurst L."/>
            <person name="Atkin R."/>
            <person name="Barron A."/>
            <person name="Bason N."/>
            <person name="Bentley S.D."/>
            <person name="Chillingworth C."/>
            <person name="Chillingworth T."/>
            <person name="Churcher C."/>
            <person name="Clark L."/>
            <person name="Corton C."/>
            <person name="Cronin A."/>
            <person name="Doggett J."/>
            <person name="Dowd L."/>
            <person name="Feltwell T."/>
            <person name="Hance Z."/>
            <person name="Harris B."/>
            <person name="Hauser H."/>
            <person name="Holroyd S."/>
            <person name="Jagels K."/>
            <person name="James K.D."/>
            <person name="Lennard N."/>
            <person name="Line A."/>
            <person name="Mayes R."/>
            <person name="Moule S."/>
            <person name="Mungall K."/>
            <person name="Ormond D."/>
            <person name="Quail M.A."/>
            <person name="Rabbinowitsch E."/>
            <person name="Rutherford K.M."/>
            <person name="Sanders M."/>
            <person name="Sharp S."/>
            <person name="Simmonds M."/>
            <person name="Stevens K."/>
            <person name="Whitehead S."/>
            <person name="Barrell B.G."/>
            <person name="Spratt B.G."/>
            <person name="Parkhill J."/>
        </authorList>
    </citation>
    <scope>NUCLEOTIDE SEQUENCE [LARGE SCALE GENOMIC DNA]</scope>
    <source>
        <strain>MRSA252</strain>
    </source>
</reference>
<name>MURB_STAAR</name>
<organism>
    <name type="scientific">Staphylococcus aureus (strain MRSA252)</name>
    <dbReference type="NCBI Taxonomy" id="282458"/>
    <lineage>
        <taxon>Bacteria</taxon>
        <taxon>Bacillati</taxon>
        <taxon>Bacillota</taxon>
        <taxon>Bacilli</taxon>
        <taxon>Bacillales</taxon>
        <taxon>Staphylococcaceae</taxon>
        <taxon>Staphylococcus</taxon>
    </lineage>
</organism>